<name>NPFF2_MOUSE</name>
<feature type="chain" id="PRO_0000069916" description="Neuropeptide FF receptor 2">
    <location>
        <begin position="1"/>
        <end position="417"/>
    </location>
</feature>
<feature type="topological domain" description="Extracellular" evidence="2">
    <location>
        <begin position="1"/>
        <end position="45"/>
    </location>
</feature>
<feature type="transmembrane region" description="Helical; Name=1" evidence="2">
    <location>
        <begin position="46"/>
        <end position="66"/>
    </location>
</feature>
<feature type="topological domain" description="Cytoplasmic" evidence="2">
    <location>
        <begin position="67"/>
        <end position="82"/>
    </location>
</feature>
<feature type="transmembrane region" description="Helical; Name=2" evidence="2">
    <location>
        <begin position="83"/>
        <end position="103"/>
    </location>
</feature>
<feature type="topological domain" description="Extracellular" evidence="2">
    <location>
        <begin position="104"/>
        <end position="119"/>
    </location>
</feature>
<feature type="transmembrane region" description="Helical; Name=3" evidence="2">
    <location>
        <begin position="120"/>
        <end position="140"/>
    </location>
</feature>
<feature type="topological domain" description="Cytoplasmic" evidence="2">
    <location>
        <begin position="141"/>
        <end position="160"/>
    </location>
</feature>
<feature type="transmembrane region" description="Helical; Name=4" evidence="2">
    <location>
        <begin position="161"/>
        <end position="181"/>
    </location>
</feature>
<feature type="topological domain" description="Extracellular" evidence="2">
    <location>
        <begin position="182"/>
        <end position="217"/>
    </location>
</feature>
<feature type="transmembrane region" description="Helical; Name=5" evidence="2">
    <location>
        <begin position="218"/>
        <end position="238"/>
    </location>
</feature>
<feature type="topological domain" description="Cytoplasmic" evidence="2">
    <location>
        <begin position="239"/>
        <end position="274"/>
    </location>
</feature>
<feature type="transmembrane region" description="Helical; Name=6" evidence="2">
    <location>
        <begin position="275"/>
        <end position="295"/>
    </location>
</feature>
<feature type="topological domain" description="Extracellular" evidence="2">
    <location>
        <begin position="296"/>
        <end position="310"/>
    </location>
</feature>
<feature type="transmembrane region" description="Helical; Name=7" evidence="2">
    <location>
        <begin position="311"/>
        <end position="331"/>
    </location>
</feature>
<feature type="topological domain" description="Cytoplasmic" evidence="2">
    <location>
        <begin position="332"/>
        <end position="417"/>
    </location>
</feature>
<feature type="region of interest" description="Disordered" evidence="4">
    <location>
        <begin position="382"/>
        <end position="401"/>
    </location>
</feature>
<feature type="glycosylation site" description="N-linked (GlcNAc...) asparagine" evidence="2">
    <location>
        <position position="8"/>
    </location>
</feature>
<feature type="glycosylation site" description="N-linked (GlcNAc...) asparagine" evidence="2">
    <location>
        <position position="20"/>
    </location>
</feature>
<feature type="glycosylation site" description="N-linked (GlcNAc...) asparagine" evidence="2">
    <location>
        <position position="31"/>
    </location>
</feature>
<feature type="glycosylation site" description="N-linked (GlcNAc...) asparagine" evidence="2">
    <location>
        <position position="198"/>
    </location>
</feature>
<feature type="disulfide bond" evidence="3">
    <location>
        <begin position="118"/>
        <end position="206"/>
    </location>
</feature>
<feature type="sequence conflict" description="In Ref. 1; AAK94198." evidence="5" ref="1">
    <original>I</original>
    <variation>T</variation>
    <location>
        <position position="89"/>
    </location>
</feature>
<feature type="sequence conflict" description="In Ref. 1; AAK94198." evidence="5" ref="1">
    <original>V</original>
    <variation>E</variation>
    <location>
        <position position="260"/>
    </location>
</feature>
<feature type="sequence conflict" description="In Ref. 1; AAK94198." evidence="5" ref="1">
    <original>I</original>
    <variation>M</variation>
    <location>
        <position position="368"/>
    </location>
</feature>
<gene>
    <name type="primary">Npffr2</name>
    <name type="synonym">Gpr74</name>
    <name type="synonym">Npff2</name>
</gene>
<comment type="function">
    <text evidence="1">Receptor for NPAF (A-18-F-amide) and NPFF (F-8-F-amide) neuropeptides, also known as morphine-modulating peptides. Can also be activated by a variety of naturally occurring or synthetic FMRF-amide like ligands. This receptor mediates its action by association with G proteins that activate a phosphatidylinositol-calcium second messenger system.</text>
</comment>
<comment type="subcellular location">
    <subcellularLocation>
        <location evidence="1">Cell membrane</location>
        <topology evidence="2">Multi-pass membrane protein</topology>
    </subcellularLocation>
</comment>
<comment type="similarity">
    <text evidence="3">Belongs to the G-protein coupled receptor 1 family.</text>
</comment>
<reference key="1">
    <citation type="submission" date="2000-12" db="EMBL/GenBank/DDBJ databases">
        <title>Identification and characterization of two cognate receptors for mammalian FMRFamide-like neuropeptides.</title>
        <authorList>
            <person name="Liu Q."/>
            <person name="Guan X.-M."/>
            <person name="McDonald T.P."/>
            <person name="Jiang Q."/>
            <person name="Zeng Z."/>
            <person name="Marlene J."/>
            <person name="Williams D.L. Jr."/>
            <person name="Hong Y."/>
            <person name="Figueroa D."/>
            <person name="Clements M.K."/>
            <person name="Mallee J."/>
            <person name="Wang R."/>
            <person name="Evans J."/>
            <person name="Gould R."/>
            <person name="Austin C.P."/>
        </authorList>
    </citation>
    <scope>NUCLEOTIDE SEQUENCE [MRNA]</scope>
</reference>
<reference key="2">
    <citation type="journal article" date="2005" name="Science">
        <title>The transcriptional landscape of the mammalian genome.</title>
        <authorList>
            <person name="Carninci P."/>
            <person name="Kasukawa T."/>
            <person name="Katayama S."/>
            <person name="Gough J."/>
            <person name="Frith M.C."/>
            <person name="Maeda N."/>
            <person name="Oyama R."/>
            <person name="Ravasi T."/>
            <person name="Lenhard B."/>
            <person name="Wells C."/>
            <person name="Kodzius R."/>
            <person name="Shimokawa K."/>
            <person name="Bajic V.B."/>
            <person name="Brenner S.E."/>
            <person name="Batalov S."/>
            <person name="Forrest A.R."/>
            <person name="Zavolan M."/>
            <person name="Davis M.J."/>
            <person name="Wilming L.G."/>
            <person name="Aidinis V."/>
            <person name="Allen J.E."/>
            <person name="Ambesi-Impiombato A."/>
            <person name="Apweiler R."/>
            <person name="Aturaliya R.N."/>
            <person name="Bailey T.L."/>
            <person name="Bansal M."/>
            <person name="Baxter L."/>
            <person name="Beisel K.W."/>
            <person name="Bersano T."/>
            <person name="Bono H."/>
            <person name="Chalk A.M."/>
            <person name="Chiu K.P."/>
            <person name="Choudhary V."/>
            <person name="Christoffels A."/>
            <person name="Clutterbuck D.R."/>
            <person name="Crowe M.L."/>
            <person name="Dalla E."/>
            <person name="Dalrymple B.P."/>
            <person name="de Bono B."/>
            <person name="Della Gatta G."/>
            <person name="di Bernardo D."/>
            <person name="Down T."/>
            <person name="Engstrom P."/>
            <person name="Fagiolini M."/>
            <person name="Faulkner G."/>
            <person name="Fletcher C.F."/>
            <person name="Fukushima T."/>
            <person name="Furuno M."/>
            <person name="Futaki S."/>
            <person name="Gariboldi M."/>
            <person name="Georgii-Hemming P."/>
            <person name="Gingeras T.R."/>
            <person name="Gojobori T."/>
            <person name="Green R.E."/>
            <person name="Gustincich S."/>
            <person name="Harbers M."/>
            <person name="Hayashi Y."/>
            <person name="Hensch T.K."/>
            <person name="Hirokawa N."/>
            <person name="Hill D."/>
            <person name="Huminiecki L."/>
            <person name="Iacono M."/>
            <person name="Ikeo K."/>
            <person name="Iwama A."/>
            <person name="Ishikawa T."/>
            <person name="Jakt M."/>
            <person name="Kanapin A."/>
            <person name="Katoh M."/>
            <person name="Kawasawa Y."/>
            <person name="Kelso J."/>
            <person name="Kitamura H."/>
            <person name="Kitano H."/>
            <person name="Kollias G."/>
            <person name="Krishnan S.P."/>
            <person name="Kruger A."/>
            <person name="Kummerfeld S.K."/>
            <person name="Kurochkin I.V."/>
            <person name="Lareau L.F."/>
            <person name="Lazarevic D."/>
            <person name="Lipovich L."/>
            <person name="Liu J."/>
            <person name="Liuni S."/>
            <person name="McWilliam S."/>
            <person name="Madan Babu M."/>
            <person name="Madera M."/>
            <person name="Marchionni L."/>
            <person name="Matsuda H."/>
            <person name="Matsuzawa S."/>
            <person name="Miki H."/>
            <person name="Mignone F."/>
            <person name="Miyake S."/>
            <person name="Morris K."/>
            <person name="Mottagui-Tabar S."/>
            <person name="Mulder N."/>
            <person name="Nakano N."/>
            <person name="Nakauchi H."/>
            <person name="Ng P."/>
            <person name="Nilsson R."/>
            <person name="Nishiguchi S."/>
            <person name="Nishikawa S."/>
            <person name="Nori F."/>
            <person name="Ohara O."/>
            <person name="Okazaki Y."/>
            <person name="Orlando V."/>
            <person name="Pang K.C."/>
            <person name="Pavan W.J."/>
            <person name="Pavesi G."/>
            <person name="Pesole G."/>
            <person name="Petrovsky N."/>
            <person name="Piazza S."/>
            <person name="Reed J."/>
            <person name="Reid J.F."/>
            <person name="Ring B.Z."/>
            <person name="Ringwald M."/>
            <person name="Rost B."/>
            <person name="Ruan Y."/>
            <person name="Salzberg S.L."/>
            <person name="Sandelin A."/>
            <person name="Schneider C."/>
            <person name="Schoenbach C."/>
            <person name="Sekiguchi K."/>
            <person name="Semple C.A."/>
            <person name="Seno S."/>
            <person name="Sessa L."/>
            <person name="Sheng Y."/>
            <person name="Shibata Y."/>
            <person name="Shimada H."/>
            <person name="Shimada K."/>
            <person name="Silva D."/>
            <person name="Sinclair B."/>
            <person name="Sperling S."/>
            <person name="Stupka E."/>
            <person name="Sugiura K."/>
            <person name="Sultana R."/>
            <person name="Takenaka Y."/>
            <person name="Taki K."/>
            <person name="Tammoja K."/>
            <person name="Tan S.L."/>
            <person name="Tang S."/>
            <person name="Taylor M.S."/>
            <person name="Tegner J."/>
            <person name="Teichmann S.A."/>
            <person name="Ueda H.R."/>
            <person name="van Nimwegen E."/>
            <person name="Verardo R."/>
            <person name="Wei C.L."/>
            <person name="Yagi K."/>
            <person name="Yamanishi H."/>
            <person name="Zabarovsky E."/>
            <person name="Zhu S."/>
            <person name="Zimmer A."/>
            <person name="Hide W."/>
            <person name="Bult C."/>
            <person name="Grimmond S.M."/>
            <person name="Teasdale R.D."/>
            <person name="Liu E.T."/>
            <person name="Brusic V."/>
            <person name="Quackenbush J."/>
            <person name="Wahlestedt C."/>
            <person name="Mattick J.S."/>
            <person name="Hume D.A."/>
            <person name="Kai C."/>
            <person name="Sasaki D."/>
            <person name="Tomaru Y."/>
            <person name="Fukuda S."/>
            <person name="Kanamori-Katayama M."/>
            <person name="Suzuki M."/>
            <person name="Aoki J."/>
            <person name="Arakawa T."/>
            <person name="Iida J."/>
            <person name="Imamura K."/>
            <person name="Itoh M."/>
            <person name="Kato T."/>
            <person name="Kawaji H."/>
            <person name="Kawagashira N."/>
            <person name="Kawashima T."/>
            <person name="Kojima M."/>
            <person name="Kondo S."/>
            <person name="Konno H."/>
            <person name="Nakano K."/>
            <person name="Ninomiya N."/>
            <person name="Nishio T."/>
            <person name="Okada M."/>
            <person name="Plessy C."/>
            <person name="Shibata K."/>
            <person name="Shiraki T."/>
            <person name="Suzuki S."/>
            <person name="Tagami M."/>
            <person name="Waki K."/>
            <person name="Watahiki A."/>
            <person name="Okamura-Oho Y."/>
            <person name="Suzuki H."/>
            <person name="Kawai J."/>
            <person name="Hayashizaki Y."/>
        </authorList>
    </citation>
    <scope>NUCLEOTIDE SEQUENCE [LARGE SCALE MRNA]</scope>
    <source>
        <strain>C57BL/6J</strain>
    </source>
</reference>
<protein>
    <recommendedName>
        <fullName>Neuropeptide FF receptor 2</fullName>
    </recommendedName>
    <alternativeName>
        <fullName>G-protein coupled receptor 74</fullName>
    </alternativeName>
    <alternativeName>
        <fullName>Neuropeptide NPFF receptor</fullName>
    </alternativeName>
</protein>
<organism>
    <name type="scientific">Mus musculus</name>
    <name type="common">Mouse</name>
    <dbReference type="NCBI Taxonomy" id="10090"/>
    <lineage>
        <taxon>Eukaryota</taxon>
        <taxon>Metazoa</taxon>
        <taxon>Chordata</taxon>
        <taxon>Craniata</taxon>
        <taxon>Vertebrata</taxon>
        <taxon>Euteleostomi</taxon>
        <taxon>Mammalia</taxon>
        <taxon>Eutheria</taxon>
        <taxon>Euarchontoglires</taxon>
        <taxon>Glires</taxon>
        <taxon>Rodentia</taxon>
        <taxon>Myomorpha</taxon>
        <taxon>Muroidea</taxon>
        <taxon>Muridae</taxon>
        <taxon>Murinae</taxon>
        <taxon>Mus</taxon>
        <taxon>Mus</taxon>
    </lineage>
</organism>
<keyword id="KW-1003">Cell membrane</keyword>
<keyword id="KW-1015">Disulfide bond</keyword>
<keyword id="KW-0297">G-protein coupled receptor</keyword>
<keyword id="KW-0325">Glycoprotein</keyword>
<keyword id="KW-0472">Membrane</keyword>
<keyword id="KW-0675">Receptor</keyword>
<keyword id="KW-1185">Reference proteome</keyword>
<keyword id="KW-0807">Transducer</keyword>
<keyword id="KW-0812">Transmembrane</keyword>
<keyword id="KW-1133">Transmembrane helix</keyword>
<evidence type="ECO:0000250" key="1">
    <source>
        <dbReference type="UniProtKB" id="Q9Y5X5"/>
    </source>
</evidence>
<evidence type="ECO:0000255" key="2"/>
<evidence type="ECO:0000255" key="3">
    <source>
        <dbReference type="PROSITE-ProRule" id="PRU00521"/>
    </source>
</evidence>
<evidence type="ECO:0000256" key="4">
    <source>
        <dbReference type="SAM" id="MobiDB-lite"/>
    </source>
</evidence>
<evidence type="ECO:0000305" key="5"/>
<dbReference type="EMBL" id="AF330054">
    <property type="protein sequence ID" value="AAK94198.1"/>
    <property type="molecule type" value="mRNA"/>
</dbReference>
<dbReference type="EMBL" id="AK050939">
    <property type="protein sequence ID" value="BAC34468.1"/>
    <property type="molecule type" value="mRNA"/>
</dbReference>
<dbReference type="CCDS" id="CCDS19408.1"/>
<dbReference type="RefSeq" id="NP_001399316.1">
    <property type="nucleotide sequence ID" value="NM_001412387.1"/>
</dbReference>
<dbReference type="RefSeq" id="NP_573455.2">
    <property type="nucleotide sequence ID" value="NM_133192.3"/>
</dbReference>
<dbReference type="RefSeq" id="XP_017176078.1">
    <property type="nucleotide sequence ID" value="XM_017320589.1"/>
</dbReference>
<dbReference type="SMR" id="Q924H0"/>
<dbReference type="CORUM" id="Q924H0"/>
<dbReference type="FunCoup" id="Q924H0">
    <property type="interactions" value="516"/>
</dbReference>
<dbReference type="STRING" id="10090.ENSMUSP00000040033"/>
<dbReference type="BindingDB" id="Q924H0"/>
<dbReference type="ChEMBL" id="CHEMBL4523416"/>
<dbReference type="GlyCosmos" id="Q924H0">
    <property type="glycosylation" value="4 sites, No reported glycans"/>
</dbReference>
<dbReference type="GlyGen" id="Q924H0">
    <property type="glycosylation" value="4 sites"/>
</dbReference>
<dbReference type="PhosphoSitePlus" id="Q924H0"/>
<dbReference type="SwissPalm" id="Q924H0"/>
<dbReference type="PaxDb" id="10090-ENSMUSP00000040033"/>
<dbReference type="ProteomicsDB" id="293949"/>
<dbReference type="Antibodypedia" id="3469">
    <property type="antibodies" value="222 antibodies from 28 providers"/>
</dbReference>
<dbReference type="DNASU" id="104443"/>
<dbReference type="Ensembl" id="ENSMUST00000048557.3">
    <property type="protein sequence ID" value="ENSMUSP00000040033.3"/>
    <property type="gene ID" value="ENSMUSG00000035528.5"/>
</dbReference>
<dbReference type="GeneID" id="104443"/>
<dbReference type="KEGG" id="mmu:104443"/>
<dbReference type="UCSC" id="uc008yan.1">
    <property type="organism name" value="mouse"/>
</dbReference>
<dbReference type="AGR" id="MGI:1860130"/>
<dbReference type="CTD" id="10886"/>
<dbReference type="MGI" id="MGI:1860130">
    <property type="gene designation" value="Npffr2"/>
</dbReference>
<dbReference type="VEuPathDB" id="HostDB:ENSMUSG00000035528"/>
<dbReference type="eggNOG" id="KOG3656">
    <property type="taxonomic scope" value="Eukaryota"/>
</dbReference>
<dbReference type="GeneTree" id="ENSGT01130000278294"/>
<dbReference type="HOGENOM" id="CLU_009579_6_1_1"/>
<dbReference type="InParanoid" id="Q924H0"/>
<dbReference type="OMA" id="TRPVYWC"/>
<dbReference type="OrthoDB" id="5953793at2759"/>
<dbReference type="PhylomeDB" id="Q924H0"/>
<dbReference type="TreeFam" id="TF315303"/>
<dbReference type="Reactome" id="R-MMU-389397">
    <property type="pathway name" value="Orexin and neuropeptides FF and QRFP bind to their respective receptors"/>
</dbReference>
<dbReference type="Reactome" id="R-MMU-416476">
    <property type="pathway name" value="G alpha (q) signalling events"/>
</dbReference>
<dbReference type="BioGRID-ORCS" id="104443">
    <property type="hits" value="2 hits in 76 CRISPR screens"/>
</dbReference>
<dbReference type="ChiTaRS" id="Npffr2">
    <property type="organism name" value="mouse"/>
</dbReference>
<dbReference type="PRO" id="PR:Q924H0"/>
<dbReference type="Proteomes" id="UP000000589">
    <property type="component" value="Chromosome 5"/>
</dbReference>
<dbReference type="RNAct" id="Q924H0">
    <property type="molecule type" value="protein"/>
</dbReference>
<dbReference type="Bgee" id="ENSMUSG00000035528">
    <property type="expression patterns" value="Expressed in primary oocyte and 15 other cell types or tissues"/>
</dbReference>
<dbReference type="GO" id="GO:0015629">
    <property type="term" value="C:actin cytoskeleton"/>
    <property type="evidence" value="ECO:0007669"/>
    <property type="project" value="Ensembl"/>
</dbReference>
<dbReference type="GO" id="GO:0005886">
    <property type="term" value="C:plasma membrane"/>
    <property type="evidence" value="ECO:0000250"/>
    <property type="project" value="MGI"/>
</dbReference>
<dbReference type="GO" id="GO:0008188">
    <property type="term" value="F:neuropeptide receptor activity"/>
    <property type="evidence" value="ECO:0007669"/>
    <property type="project" value="Ensembl"/>
</dbReference>
<dbReference type="GO" id="GO:0031628">
    <property type="term" value="F:opioid receptor binding"/>
    <property type="evidence" value="ECO:0007669"/>
    <property type="project" value="InterPro"/>
</dbReference>
<dbReference type="GO" id="GO:0007186">
    <property type="term" value="P:G protein-coupled receptor signaling pathway"/>
    <property type="evidence" value="ECO:0000250"/>
    <property type="project" value="MGI"/>
</dbReference>
<dbReference type="GO" id="GO:0043408">
    <property type="term" value="P:regulation of MAPK cascade"/>
    <property type="evidence" value="ECO:0007669"/>
    <property type="project" value="InterPro"/>
</dbReference>
<dbReference type="FunFam" id="1.20.1070.10:FF:000137">
    <property type="entry name" value="neuropeptide FF receptor 2"/>
    <property type="match status" value="1"/>
</dbReference>
<dbReference type="Gene3D" id="1.20.1070.10">
    <property type="entry name" value="Rhodopsin 7-helix transmembrane proteins"/>
    <property type="match status" value="1"/>
</dbReference>
<dbReference type="InterPro" id="IPR000276">
    <property type="entry name" value="GPCR_Rhodpsn"/>
</dbReference>
<dbReference type="InterPro" id="IPR017452">
    <property type="entry name" value="GPCR_Rhodpsn_7TM"/>
</dbReference>
<dbReference type="InterPro" id="IPR005395">
    <property type="entry name" value="NPFF_rcpt"/>
</dbReference>
<dbReference type="InterPro" id="IPR005397">
    <property type="entry name" value="NPFF_rcpt_2"/>
</dbReference>
<dbReference type="PANTHER" id="PTHR24241:SF132">
    <property type="entry name" value="NEUROPEPTIDE FF RECEPTOR 2"/>
    <property type="match status" value="1"/>
</dbReference>
<dbReference type="PANTHER" id="PTHR24241">
    <property type="entry name" value="NEUROPEPTIDE RECEPTOR-RELATED G-PROTEIN COUPLED RECEPTOR"/>
    <property type="match status" value="1"/>
</dbReference>
<dbReference type="Pfam" id="PF00001">
    <property type="entry name" value="7tm_1"/>
    <property type="match status" value="1"/>
</dbReference>
<dbReference type="PRINTS" id="PR00237">
    <property type="entry name" value="GPCRRHODOPSN"/>
</dbReference>
<dbReference type="PRINTS" id="PR01570">
    <property type="entry name" value="NPFFRECEPTOR"/>
</dbReference>
<dbReference type="PRINTS" id="PR01572">
    <property type="entry name" value="NPFFRECEPTR2"/>
</dbReference>
<dbReference type="SMART" id="SM01381">
    <property type="entry name" value="7TM_GPCR_Srsx"/>
    <property type="match status" value="1"/>
</dbReference>
<dbReference type="SUPFAM" id="SSF81321">
    <property type="entry name" value="Family A G protein-coupled receptor-like"/>
    <property type="match status" value="1"/>
</dbReference>
<dbReference type="PROSITE" id="PS00237">
    <property type="entry name" value="G_PROTEIN_RECEP_F1_1"/>
    <property type="match status" value="1"/>
</dbReference>
<dbReference type="PROSITE" id="PS50262">
    <property type="entry name" value="G_PROTEIN_RECEP_F1_2"/>
    <property type="match status" value="1"/>
</dbReference>
<proteinExistence type="evidence at transcript level"/>
<sequence length="417" mass="47449">MSEKWDSNSSESWNHIWSGNDTQHHWYSDINITYVNYYLHQPQVAAVFISSYLLIFVLCMVGNTVVCFIVIRNRHMHTVTNFFILNLAISDLLVGIFCMPITLLDNIIAGWPFGSSMCKISGLVQGISVAASVFTLVAIAVDRFRCVVYPFKPKLTVKTAFVTIVIIWGLAIAIMTPSAIMLHVQEEKYYRVRLSSHNKTSTVYWCREDWPRHEMRRIYTTVLFATIYLAPLSLIVIMYARIGASLFKTAAHCTGKQRPVQWHVSKKKQKVIKMLLTVALLFILSWLPLWTLMMLSDYTDLSPNKLRIINIYIYPFAHWLAFCNSSVNPIIYGFFNENFRNGFQDAFQICQKKAKPQEAYSLRAKRNIVINTSGLLVQEPVSQNPGGENLGCGKSADNPTQESLIEEMGEATNSTVA</sequence>
<accession>Q924H0</accession>
<accession>Q8BKR6</accession>